<evidence type="ECO:0000255" key="1">
    <source>
        <dbReference type="HAMAP-Rule" id="MF_03017"/>
    </source>
</evidence>
<evidence type="ECO:0000256" key="2">
    <source>
        <dbReference type="SAM" id="MobiDB-lite"/>
    </source>
</evidence>
<protein>
    <recommendedName>
        <fullName evidence="1">Kynureninase 1</fullName>
        <ecNumber evidence="1">3.7.1.3</ecNumber>
    </recommendedName>
    <alternativeName>
        <fullName evidence="1">Biosynthesis of nicotinic acid protein 5-1</fullName>
    </alternativeName>
    <alternativeName>
        <fullName evidence="1">L-kynurenine hydrolase 1</fullName>
    </alternativeName>
</protein>
<keyword id="KW-0963">Cytoplasm</keyword>
<keyword id="KW-0378">Hydrolase</keyword>
<keyword id="KW-0662">Pyridine nucleotide biosynthesis</keyword>
<keyword id="KW-0663">Pyridoxal phosphate</keyword>
<keyword id="KW-1185">Reference proteome</keyword>
<sequence>MGSRLHTREIQNGPPLPYNDDIRAFSKEYAESLDAQDPLHRFRNEFVIPSKEDLKRTTLDPNQEPEHSPTPSLYLCGNSLGLQPQSTRKYIEYYLRAWATKGVTGHFVQHDDQLLPPFVDVDAAGARLMAPIVGAMESEVAVMGTLTTNLHILMASFYQPTQERYKIIIEGKAFPSDHYAVESQIKHHNFDPKDGMVLIEPEDHTRPVLDTEHIIRTIDEHASSTAVILLSAIQYYTGQYFDIKRITAHAQSKGILVGWDCAHAAGNVDLQLHDWNVDFAAWCTYKYLNSGPGGTAALFVHERHGRVNLEQVNSESEPFRPRLSGWWGGDKKTRFLMDNNFIPQPGAAGFQLSNPSVLDMNAVVASLELFKQASMAEIRKKSLHITGYLEHLLLNYPLDTPSEKKPFTIITPSNPAERGAQLSVRLQPGLLDHVLETLEDNAVVIDERKPDVIRVAPAPLYNTYTDVWEFCRIFHEACQKALKARG</sequence>
<feature type="chain" id="PRO_0000356961" description="Kynureninase 1">
    <location>
        <begin position="1"/>
        <end position="486"/>
    </location>
</feature>
<feature type="region of interest" description="Disordered" evidence="2">
    <location>
        <begin position="53"/>
        <end position="72"/>
    </location>
</feature>
<feature type="binding site" evidence="1">
    <location>
        <position position="146"/>
    </location>
    <ligand>
        <name>pyridoxal 5'-phosphate</name>
        <dbReference type="ChEBI" id="CHEBI:597326"/>
    </ligand>
</feature>
<feature type="binding site" evidence="1">
    <location>
        <position position="147"/>
    </location>
    <ligand>
        <name>pyridoxal 5'-phosphate</name>
        <dbReference type="ChEBI" id="CHEBI:597326"/>
    </ligand>
</feature>
<feature type="binding site" evidence="1">
    <location>
        <begin position="174"/>
        <end position="177"/>
    </location>
    <ligand>
        <name>pyridoxal 5'-phosphate</name>
        <dbReference type="ChEBI" id="CHEBI:597326"/>
    </ligand>
</feature>
<feature type="binding site" evidence="1">
    <location>
        <position position="231"/>
    </location>
    <ligand>
        <name>pyridoxal 5'-phosphate</name>
        <dbReference type="ChEBI" id="CHEBI:597326"/>
    </ligand>
</feature>
<feature type="binding site" evidence="1">
    <location>
        <position position="260"/>
    </location>
    <ligand>
        <name>pyridoxal 5'-phosphate</name>
        <dbReference type="ChEBI" id="CHEBI:597326"/>
    </ligand>
</feature>
<feature type="binding site" evidence="1">
    <location>
        <position position="263"/>
    </location>
    <ligand>
        <name>pyridoxal 5'-phosphate</name>
        <dbReference type="ChEBI" id="CHEBI:597326"/>
    </ligand>
</feature>
<feature type="binding site" evidence="1">
    <location>
        <position position="285"/>
    </location>
    <ligand>
        <name>pyridoxal 5'-phosphate</name>
        <dbReference type="ChEBI" id="CHEBI:597326"/>
    </ligand>
</feature>
<feature type="binding site" evidence="1">
    <location>
        <position position="326"/>
    </location>
    <ligand>
        <name>pyridoxal 5'-phosphate</name>
        <dbReference type="ChEBI" id="CHEBI:597326"/>
    </ligand>
</feature>
<feature type="binding site" evidence="1">
    <location>
        <position position="354"/>
    </location>
    <ligand>
        <name>pyridoxal 5'-phosphate</name>
        <dbReference type="ChEBI" id="CHEBI:597326"/>
    </ligand>
</feature>
<feature type="modified residue" description="N6-(pyridoxal phosphate)lysine" evidence="1">
    <location>
        <position position="286"/>
    </location>
</feature>
<gene>
    <name type="primary">bna5-1</name>
    <name type="ORF">ACLA_069390</name>
</gene>
<accession>A1C688</accession>
<reference key="1">
    <citation type="journal article" date="2008" name="PLoS Genet.">
        <title>Genomic islands in the pathogenic filamentous fungus Aspergillus fumigatus.</title>
        <authorList>
            <person name="Fedorova N.D."/>
            <person name="Khaldi N."/>
            <person name="Joardar V.S."/>
            <person name="Maiti R."/>
            <person name="Amedeo P."/>
            <person name="Anderson M.J."/>
            <person name="Crabtree J."/>
            <person name="Silva J.C."/>
            <person name="Badger J.H."/>
            <person name="Albarraq A."/>
            <person name="Angiuoli S."/>
            <person name="Bussey H."/>
            <person name="Bowyer P."/>
            <person name="Cotty P.J."/>
            <person name="Dyer P.S."/>
            <person name="Egan A."/>
            <person name="Galens K."/>
            <person name="Fraser-Liggett C.M."/>
            <person name="Haas B.J."/>
            <person name="Inman J.M."/>
            <person name="Kent R."/>
            <person name="Lemieux S."/>
            <person name="Malavazi I."/>
            <person name="Orvis J."/>
            <person name="Roemer T."/>
            <person name="Ronning C.M."/>
            <person name="Sundaram J.P."/>
            <person name="Sutton G."/>
            <person name="Turner G."/>
            <person name="Venter J.C."/>
            <person name="White O.R."/>
            <person name="Whitty B.R."/>
            <person name="Youngman P."/>
            <person name="Wolfe K.H."/>
            <person name="Goldman G.H."/>
            <person name="Wortman J.R."/>
            <person name="Jiang B."/>
            <person name="Denning D.W."/>
            <person name="Nierman W.C."/>
        </authorList>
    </citation>
    <scope>NUCLEOTIDE SEQUENCE [LARGE SCALE GENOMIC DNA]</scope>
    <source>
        <strain>ATCC 1007 / CBS 513.65 / DSM 816 / NCTC 3887 / NRRL 1 / QM 1276 / 107</strain>
    </source>
</reference>
<comment type="function">
    <text evidence="1">Catalyzes the cleavage of L-kynurenine (L-Kyn) and L-3-hydroxykynurenine (L-3OHKyn) into anthranilic acid (AA) and 3-hydroxyanthranilic acid (3-OHAA), respectively.</text>
</comment>
<comment type="catalytic activity">
    <reaction evidence="1">
        <text>L-kynurenine + H2O = anthranilate + L-alanine + H(+)</text>
        <dbReference type="Rhea" id="RHEA:16813"/>
        <dbReference type="ChEBI" id="CHEBI:15377"/>
        <dbReference type="ChEBI" id="CHEBI:15378"/>
        <dbReference type="ChEBI" id="CHEBI:16567"/>
        <dbReference type="ChEBI" id="CHEBI:57959"/>
        <dbReference type="ChEBI" id="CHEBI:57972"/>
        <dbReference type="EC" id="3.7.1.3"/>
    </reaction>
</comment>
<comment type="catalytic activity">
    <reaction evidence="1">
        <text>3-hydroxy-L-kynurenine + H2O = 3-hydroxyanthranilate + L-alanine + H(+)</text>
        <dbReference type="Rhea" id="RHEA:25143"/>
        <dbReference type="ChEBI" id="CHEBI:15377"/>
        <dbReference type="ChEBI" id="CHEBI:15378"/>
        <dbReference type="ChEBI" id="CHEBI:36559"/>
        <dbReference type="ChEBI" id="CHEBI:57972"/>
        <dbReference type="ChEBI" id="CHEBI:58125"/>
        <dbReference type="EC" id="3.7.1.3"/>
    </reaction>
</comment>
<comment type="cofactor">
    <cofactor evidence="1">
        <name>pyridoxal 5'-phosphate</name>
        <dbReference type="ChEBI" id="CHEBI:597326"/>
    </cofactor>
</comment>
<comment type="pathway">
    <text evidence="1">Amino-acid degradation; L-kynurenine degradation; L-alanine and anthranilate from L-kynurenine: step 1/1.</text>
</comment>
<comment type="pathway">
    <text evidence="1">Cofactor biosynthesis; NAD(+) biosynthesis; quinolinate from L-kynurenine: step 2/3.</text>
</comment>
<comment type="subunit">
    <text evidence="1">Homodimer.</text>
</comment>
<comment type="subcellular location">
    <subcellularLocation>
        <location evidence="1">Cytoplasm</location>
    </subcellularLocation>
</comment>
<comment type="similarity">
    <text evidence="1">Belongs to the kynureninase family.</text>
</comment>
<dbReference type="EC" id="3.7.1.3" evidence="1"/>
<dbReference type="EMBL" id="DS027045">
    <property type="protein sequence ID" value="EAW13909.1"/>
    <property type="molecule type" value="Genomic_DNA"/>
</dbReference>
<dbReference type="RefSeq" id="XP_001275335.1">
    <property type="nucleotide sequence ID" value="XM_001275334.1"/>
</dbReference>
<dbReference type="SMR" id="A1C688"/>
<dbReference type="STRING" id="344612.A1C688"/>
<dbReference type="EnsemblFungi" id="EAW13909">
    <property type="protein sequence ID" value="EAW13909"/>
    <property type="gene ID" value="ACLA_069390"/>
</dbReference>
<dbReference type="GeneID" id="4707638"/>
<dbReference type="KEGG" id="act:ACLA_069390"/>
<dbReference type="VEuPathDB" id="FungiDB:ACLA_069390"/>
<dbReference type="eggNOG" id="KOG3846">
    <property type="taxonomic scope" value="Eukaryota"/>
</dbReference>
<dbReference type="HOGENOM" id="CLU_003433_4_0_1"/>
<dbReference type="OMA" id="LPGWNSH"/>
<dbReference type="OrthoDB" id="5978656at2759"/>
<dbReference type="UniPathway" id="UPA00253">
    <property type="reaction ID" value="UER00329"/>
</dbReference>
<dbReference type="UniPathway" id="UPA00334">
    <property type="reaction ID" value="UER00455"/>
</dbReference>
<dbReference type="Proteomes" id="UP000006701">
    <property type="component" value="Unassembled WGS sequence"/>
</dbReference>
<dbReference type="GO" id="GO:0005737">
    <property type="term" value="C:cytoplasm"/>
    <property type="evidence" value="ECO:0007669"/>
    <property type="project" value="UniProtKB-SubCell"/>
</dbReference>
<dbReference type="GO" id="GO:0030429">
    <property type="term" value="F:kynureninase activity"/>
    <property type="evidence" value="ECO:0007669"/>
    <property type="project" value="UniProtKB-UniRule"/>
</dbReference>
<dbReference type="GO" id="GO:0030170">
    <property type="term" value="F:pyridoxal phosphate binding"/>
    <property type="evidence" value="ECO:0007669"/>
    <property type="project" value="UniProtKB-UniRule"/>
</dbReference>
<dbReference type="GO" id="GO:0034354">
    <property type="term" value="P:'de novo' NAD biosynthetic process from L-tryptophan"/>
    <property type="evidence" value="ECO:0007669"/>
    <property type="project" value="UniProtKB-UniRule"/>
</dbReference>
<dbReference type="GO" id="GO:0043420">
    <property type="term" value="P:anthranilate metabolic process"/>
    <property type="evidence" value="ECO:0007669"/>
    <property type="project" value="UniProtKB-UniRule"/>
</dbReference>
<dbReference type="GO" id="GO:0097053">
    <property type="term" value="P:L-kynurenine catabolic process"/>
    <property type="evidence" value="ECO:0007669"/>
    <property type="project" value="UniProtKB-UniRule"/>
</dbReference>
<dbReference type="GO" id="GO:0019441">
    <property type="term" value="P:L-tryptophan catabolic process to kynurenine"/>
    <property type="evidence" value="ECO:0007669"/>
    <property type="project" value="TreeGrafter"/>
</dbReference>
<dbReference type="GO" id="GO:0019805">
    <property type="term" value="P:quinolinate biosynthetic process"/>
    <property type="evidence" value="ECO:0007669"/>
    <property type="project" value="UniProtKB-UniRule"/>
</dbReference>
<dbReference type="FunFam" id="3.40.640.10:FF:000031">
    <property type="entry name" value="Kynureninase"/>
    <property type="match status" value="1"/>
</dbReference>
<dbReference type="Gene3D" id="3.90.1150.10">
    <property type="entry name" value="Aspartate Aminotransferase, domain 1"/>
    <property type="match status" value="1"/>
</dbReference>
<dbReference type="Gene3D" id="3.40.640.10">
    <property type="entry name" value="Type I PLP-dependent aspartate aminotransferase-like (Major domain)"/>
    <property type="match status" value="1"/>
</dbReference>
<dbReference type="HAMAP" id="MF_01970">
    <property type="entry name" value="Kynureninase"/>
    <property type="match status" value="1"/>
</dbReference>
<dbReference type="InterPro" id="IPR010111">
    <property type="entry name" value="Kynureninase"/>
</dbReference>
<dbReference type="InterPro" id="IPR015424">
    <property type="entry name" value="PyrdxlP-dep_Trfase"/>
</dbReference>
<dbReference type="InterPro" id="IPR015421">
    <property type="entry name" value="PyrdxlP-dep_Trfase_major"/>
</dbReference>
<dbReference type="InterPro" id="IPR015422">
    <property type="entry name" value="PyrdxlP-dep_Trfase_small"/>
</dbReference>
<dbReference type="NCBIfam" id="TIGR01814">
    <property type="entry name" value="kynureninase"/>
    <property type="match status" value="1"/>
</dbReference>
<dbReference type="PANTHER" id="PTHR14084">
    <property type="entry name" value="KYNURENINASE"/>
    <property type="match status" value="1"/>
</dbReference>
<dbReference type="PANTHER" id="PTHR14084:SF0">
    <property type="entry name" value="KYNURENINASE"/>
    <property type="match status" value="1"/>
</dbReference>
<dbReference type="Pfam" id="PF22580">
    <property type="entry name" value="KYNU_C"/>
    <property type="match status" value="1"/>
</dbReference>
<dbReference type="PIRSF" id="PIRSF038800">
    <property type="entry name" value="KYNU"/>
    <property type="match status" value="1"/>
</dbReference>
<dbReference type="SUPFAM" id="SSF53383">
    <property type="entry name" value="PLP-dependent transferases"/>
    <property type="match status" value="1"/>
</dbReference>
<organism>
    <name type="scientific">Aspergillus clavatus (strain ATCC 1007 / CBS 513.65 / DSM 816 / NCTC 3887 / NRRL 1 / QM 1276 / 107)</name>
    <dbReference type="NCBI Taxonomy" id="344612"/>
    <lineage>
        <taxon>Eukaryota</taxon>
        <taxon>Fungi</taxon>
        <taxon>Dikarya</taxon>
        <taxon>Ascomycota</taxon>
        <taxon>Pezizomycotina</taxon>
        <taxon>Eurotiomycetes</taxon>
        <taxon>Eurotiomycetidae</taxon>
        <taxon>Eurotiales</taxon>
        <taxon>Aspergillaceae</taxon>
        <taxon>Aspergillus</taxon>
        <taxon>Aspergillus subgen. Fumigati</taxon>
    </lineage>
</organism>
<name>KYNU1_ASPCL</name>
<proteinExistence type="inferred from homology"/>